<proteinExistence type="evidence at transcript level"/>
<organism>
    <name type="scientific">Centruroides limpidus</name>
    <name type="common">Mexican scorpion</name>
    <dbReference type="NCBI Taxonomy" id="6876"/>
    <lineage>
        <taxon>Eukaryota</taxon>
        <taxon>Metazoa</taxon>
        <taxon>Ecdysozoa</taxon>
        <taxon>Arthropoda</taxon>
        <taxon>Chelicerata</taxon>
        <taxon>Arachnida</taxon>
        <taxon>Scorpiones</taxon>
        <taxon>Buthida</taxon>
        <taxon>Buthoidea</taxon>
        <taxon>Buthidae</taxon>
        <taxon>Centruroides</taxon>
    </lineage>
</organism>
<evidence type="ECO:0000250" key="1"/>
<evidence type="ECO:0000255" key="2">
    <source>
        <dbReference type="PROSITE-ProRule" id="PRU01210"/>
    </source>
</evidence>
<evidence type="ECO:0000305" key="3"/>
<accession>Q7Z1K7</accession>
<comment type="function">
    <text evidence="1">Beta toxins bind voltage-independently at site-4 of sodium channels (Nav) and shift the voltage of activation toward more negative potentials thereby affecting sodium channel activation and promoting spontaneous and repetitive firing.</text>
</comment>
<comment type="subcellular location">
    <subcellularLocation>
        <location evidence="1">Secreted</location>
    </subcellularLocation>
</comment>
<comment type="tissue specificity">
    <text>Expressed by the venom gland.</text>
</comment>
<comment type="domain">
    <text evidence="3">Has the structural arrangement of an alpha-helix connected to antiparallel beta-sheets by disulfide bonds (CS-alpha/beta).</text>
</comment>
<comment type="similarity">
    <text evidence="3">Belongs to the long (4 C-C) scorpion toxin superfamily. Sodium channel inhibitor family. Beta subfamily.</text>
</comment>
<name>SCX5B_CENLI</name>
<dbReference type="EMBL" id="AF491129">
    <property type="protein sequence ID" value="AAP49504.1"/>
    <property type="molecule type" value="mRNA"/>
</dbReference>
<dbReference type="SMR" id="Q7Z1K7"/>
<dbReference type="GO" id="GO:0005576">
    <property type="term" value="C:extracellular region"/>
    <property type="evidence" value="ECO:0007669"/>
    <property type="project" value="UniProtKB-SubCell"/>
</dbReference>
<dbReference type="GO" id="GO:0019871">
    <property type="term" value="F:sodium channel inhibitor activity"/>
    <property type="evidence" value="ECO:0007669"/>
    <property type="project" value="InterPro"/>
</dbReference>
<dbReference type="GO" id="GO:0090729">
    <property type="term" value="F:toxin activity"/>
    <property type="evidence" value="ECO:0007669"/>
    <property type="project" value="UniProtKB-KW"/>
</dbReference>
<dbReference type="GO" id="GO:0006952">
    <property type="term" value="P:defense response"/>
    <property type="evidence" value="ECO:0007669"/>
    <property type="project" value="InterPro"/>
</dbReference>
<dbReference type="CDD" id="cd23106">
    <property type="entry name" value="neurotoxins_LC_scorpion"/>
    <property type="match status" value="1"/>
</dbReference>
<dbReference type="FunFam" id="3.30.30.10:FF:000002">
    <property type="entry name" value="Alpha-like toxin BmK-M1"/>
    <property type="match status" value="1"/>
</dbReference>
<dbReference type="Gene3D" id="3.30.30.10">
    <property type="entry name" value="Knottin, scorpion toxin-like"/>
    <property type="match status" value="1"/>
</dbReference>
<dbReference type="InterPro" id="IPR044062">
    <property type="entry name" value="LCN-type_CS_alpha_beta_dom"/>
</dbReference>
<dbReference type="InterPro" id="IPR003614">
    <property type="entry name" value="Scorpion_toxin-like"/>
</dbReference>
<dbReference type="InterPro" id="IPR036574">
    <property type="entry name" value="Scorpion_toxin-like_sf"/>
</dbReference>
<dbReference type="InterPro" id="IPR018218">
    <property type="entry name" value="Scorpion_toxinL"/>
</dbReference>
<dbReference type="InterPro" id="IPR002061">
    <property type="entry name" value="Scorpion_toxinL/defensin"/>
</dbReference>
<dbReference type="Pfam" id="PF00537">
    <property type="entry name" value="Toxin_3"/>
    <property type="match status" value="1"/>
</dbReference>
<dbReference type="PRINTS" id="PR00285">
    <property type="entry name" value="SCORPNTOXIN"/>
</dbReference>
<dbReference type="SMART" id="SM00505">
    <property type="entry name" value="Knot1"/>
    <property type="match status" value="1"/>
</dbReference>
<dbReference type="SUPFAM" id="SSF57095">
    <property type="entry name" value="Scorpion toxin-like"/>
    <property type="match status" value="1"/>
</dbReference>
<dbReference type="PROSITE" id="PS51863">
    <property type="entry name" value="LCN_CSAB"/>
    <property type="match status" value="1"/>
</dbReference>
<keyword id="KW-1015">Disulfide bond</keyword>
<keyword id="KW-0872">Ion channel impairing toxin</keyword>
<keyword id="KW-0528">Neurotoxin</keyword>
<keyword id="KW-0964">Secreted</keyword>
<keyword id="KW-0732">Signal</keyword>
<keyword id="KW-0800">Toxin</keyword>
<keyword id="KW-0738">Voltage-gated sodium channel impairing toxin</keyword>
<feature type="signal peptide" evidence="1">
    <location>
        <begin position="1"/>
        <end position="19"/>
    </location>
</feature>
<feature type="chain" id="PRO_0000035269" description="Toxin Cll5b">
    <location>
        <begin position="20"/>
        <end position="85"/>
    </location>
</feature>
<feature type="propeptide" id="PRO_0000035270" description="Removed by a carboxypeptidase" evidence="1">
    <location>
        <begin position="86"/>
        <end position="87"/>
    </location>
</feature>
<feature type="domain" description="LCN-type CS-alpha/beta" evidence="2">
    <location>
        <begin position="20"/>
        <end position="85"/>
    </location>
</feature>
<feature type="disulfide bond" evidence="2">
    <location>
        <begin position="31"/>
        <end position="84"/>
    </location>
</feature>
<feature type="disulfide bond" evidence="2">
    <location>
        <begin position="35"/>
        <end position="60"/>
    </location>
</feature>
<feature type="disulfide bond" evidence="2">
    <location>
        <begin position="44"/>
        <end position="65"/>
    </location>
</feature>
<feature type="disulfide bond" evidence="2">
    <location>
        <begin position="48"/>
        <end position="67"/>
    </location>
</feature>
<protein>
    <recommendedName>
        <fullName>Toxin Cll5b</fullName>
    </recommendedName>
</protein>
<sequence>MNSLLMITACLAEIGTVWAKEGYLVNKSTGCKYGCFWLGKNENCDKECKAKNQGGSYGYCYSFACWCEGLPDSTPTYPLPNKSCSKK</sequence>
<reference key="1">
    <citation type="submission" date="2002-03" db="EMBL/GenBank/DDBJ databases">
        <title>Genes and peptides from the scorpion Centruroides limpidus limpidus, that recognize Na(+)-channels.</title>
        <authorList>
            <person name="Corona M."/>
            <person name="Possani L.D."/>
        </authorList>
    </citation>
    <scope>NUCLEOTIDE SEQUENCE [MRNA]</scope>
</reference>